<dbReference type="EC" id="2.7.1.59" evidence="1"/>
<dbReference type="EMBL" id="FM178379">
    <property type="protein sequence ID" value="CAQ79077.1"/>
    <property type="molecule type" value="Genomic_DNA"/>
</dbReference>
<dbReference type="RefSeq" id="WP_012550085.1">
    <property type="nucleotide sequence ID" value="NC_011312.1"/>
</dbReference>
<dbReference type="SMR" id="B6EKQ4"/>
<dbReference type="KEGG" id="vsa:VSAL_I1392"/>
<dbReference type="eggNOG" id="COG1940">
    <property type="taxonomic scope" value="Bacteria"/>
</dbReference>
<dbReference type="HOGENOM" id="CLU_036604_0_3_6"/>
<dbReference type="UniPathway" id="UPA00544"/>
<dbReference type="Proteomes" id="UP000001730">
    <property type="component" value="Chromosome 1"/>
</dbReference>
<dbReference type="GO" id="GO:0005524">
    <property type="term" value="F:ATP binding"/>
    <property type="evidence" value="ECO:0007669"/>
    <property type="project" value="UniProtKB-UniRule"/>
</dbReference>
<dbReference type="GO" id="GO:0045127">
    <property type="term" value="F:N-acetylglucosamine kinase activity"/>
    <property type="evidence" value="ECO:0007669"/>
    <property type="project" value="UniProtKB-UniRule"/>
</dbReference>
<dbReference type="GO" id="GO:0008270">
    <property type="term" value="F:zinc ion binding"/>
    <property type="evidence" value="ECO:0007669"/>
    <property type="project" value="UniProtKB-UniRule"/>
</dbReference>
<dbReference type="GO" id="GO:0006044">
    <property type="term" value="P:N-acetylglucosamine metabolic process"/>
    <property type="evidence" value="ECO:0007669"/>
    <property type="project" value="UniProtKB-UniRule"/>
</dbReference>
<dbReference type="GO" id="GO:0009254">
    <property type="term" value="P:peptidoglycan turnover"/>
    <property type="evidence" value="ECO:0007669"/>
    <property type="project" value="UniProtKB-UniRule"/>
</dbReference>
<dbReference type="CDD" id="cd24057">
    <property type="entry name" value="ASKHA_NBD_ROK_NAGK"/>
    <property type="match status" value="1"/>
</dbReference>
<dbReference type="FunFam" id="3.30.420.40:FF:000049">
    <property type="entry name" value="N-acetyl-D-glucosamine kinase"/>
    <property type="match status" value="1"/>
</dbReference>
<dbReference type="FunFam" id="3.30.420.40:FF:000051">
    <property type="entry name" value="N-acetyl-D-glucosamine kinase"/>
    <property type="match status" value="1"/>
</dbReference>
<dbReference type="Gene3D" id="3.30.420.40">
    <property type="match status" value="2"/>
</dbReference>
<dbReference type="HAMAP" id="MF_01271">
    <property type="entry name" value="GlcNAc_kinase"/>
    <property type="match status" value="1"/>
</dbReference>
<dbReference type="InterPro" id="IPR043129">
    <property type="entry name" value="ATPase_NBD"/>
</dbReference>
<dbReference type="InterPro" id="IPR023505">
    <property type="entry name" value="N-acetyl-D-glucosamine_kinase"/>
</dbReference>
<dbReference type="InterPro" id="IPR000600">
    <property type="entry name" value="ROK"/>
</dbReference>
<dbReference type="InterPro" id="IPR049874">
    <property type="entry name" value="ROK_cs"/>
</dbReference>
<dbReference type="NCBIfam" id="NF009835">
    <property type="entry name" value="PRK13310.1"/>
    <property type="match status" value="1"/>
</dbReference>
<dbReference type="PANTHER" id="PTHR18964:SF162">
    <property type="entry name" value="N-ACETYL-D-GLUCOSAMINE KINASE"/>
    <property type="match status" value="1"/>
</dbReference>
<dbReference type="PANTHER" id="PTHR18964">
    <property type="entry name" value="ROK (REPRESSOR, ORF, KINASE) FAMILY"/>
    <property type="match status" value="1"/>
</dbReference>
<dbReference type="Pfam" id="PF00480">
    <property type="entry name" value="ROK"/>
    <property type="match status" value="1"/>
</dbReference>
<dbReference type="SUPFAM" id="SSF53067">
    <property type="entry name" value="Actin-like ATPase domain"/>
    <property type="match status" value="1"/>
</dbReference>
<dbReference type="PROSITE" id="PS01125">
    <property type="entry name" value="ROK"/>
    <property type="match status" value="1"/>
</dbReference>
<gene>
    <name evidence="1" type="primary">nagK</name>
    <name type="ordered locus">VSAL_I1392</name>
</gene>
<reference key="1">
    <citation type="journal article" date="2008" name="BMC Genomics">
        <title>The genome sequence of the fish pathogen Aliivibrio salmonicida strain LFI1238 shows extensive evidence of gene decay.</title>
        <authorList>
            <person name="Hjerde E."/>
            <person name="Lorentzen M.S."/>
            <person name="Holden M.T."/>
            <person name="Seeger K."/>
            <person name="Paulsen S."/>
            <person name="Bason N."/>
            <person name="Churcher C."/>
            <person name="Harris D."/>
            <person name="Norbertczak H."/>
            <person name="Quail M.A."/>
            <person name="Sanders S."/>
            <person name="Thurston S."/>
            <person name="Parkhill J."/>
            <person name="Willassen N.P."/>
            <person name="Thomson N.R."/>
        </authorList>
    </citation>
    <scope>NUCLEOTIDE SEQUENCE [LARGE SCALE GENOMIC DNA]</scope>
    <source>
        <strain>LFI1238</strain>
    </source>
</reference>
<keyword id="KW-0067">ATP-binding</keyword>
<keyword id="KW-0119">Carbohydrate metabolism</keyword>
<keyword id="KW-0418">Kinase</keyword>
<keyword id="KW-0479">Metal-binding</keyword>
<keyword id="KW-0547">Nucleotide-binding</keyword>
<keyword id="KW-0808">Transferase</keyword>
<keyword id="KW-0862">Zinc</keyword>
<name>NAGK_ALISL</name>
<comment type="function">
    <text evidence="1">Catalyzes the phosphorylation of N-acetyl-D-glucosamine (GlcNAc) derived from cell-wall degradation, yielding GlcNAc-6-P.</text>
</comment>
<comment type="catalytic activity">
    <reaction evidence="1">
        <text>N-acetyl-D-glucosamine + ATP = N-acetyl-D-glucosamine 6-phosphate + ADP + H(+)</text>
        <dbReference type="Rhea" id="RHEA:17417"/>
        <dbReference type="ChEBI" id="CHEBI:15378"/>
        <dbReference type="ChEBI" id="CHEBI:30616"/>
        <dbReference type="ChEBI" id="CHEBI:57513"/>
        <dbReference type="ChEBI" id="CHEBI:456216"/>
        <dbReference type="ChEBI" id="CHEBI:506227"/>
        <dbReference type="EC" id="2.7.1.59"/>
    </reaction>
</comment>
<comment type="pathway">
    <text evidence="1">Cell wall biogenesis; peptidoglycan recycling.</text>
</comment>
<comment type="similarity">
    <text evidence="1">Belongs to the ROK (NagC/XylR) family. NagK subfamily.</text>
</comment>
<sequence>MYYGFDVGGTKIEFGAFNEKLERVATERIPTQTEDYSLLVNDIASLIAKYDAEFGVEGKVGLGIPGMEDAETGALLTSNVPAAKGQFLRKDLEAKIGRSVKIDNDANCFALSEAWDEELKDSPSVLGLILGTGFGGGLVFDGKVFSGYSHVAGELGHSRLPIDAWFHLGEKAPLLECGCGNKGCIDNYLSGRGFELLYAHYYGQEKKAIDIIKANEAGDADAVEHVDRFMELLAICFANLFTCFDPHVVALGGGLSNFALIYDELPKRLPKHLLSVARVPRIIKAKHGDSGGVRGAAFLNIK</sequence>
<organism>
    <name type="scientific">Aliivibrio salmonicida (strain LFI1238)</name>
    <name type="common">Vibrio salmonicida (strain LFI1238)</name>
    <dbReference type="NCBI Taxonomy" id="316275"/>
    <lineage>
        <taxon>Bacteria</taxon>
        <taxon>Pseudomonadati</taxon>
        <taxon>Pseudomonadota</taxon>
        <taxon>Gammaproteobacteria</taxon>
        <taxon>Vibrionales</taxon>
        <taxon>Vibrionaceae</taxon>
        <taxon>Aliivibrio</taxon>
    </lineage>
</organism>
<protein>
    <recommendedName>
        <fullName evidence="1">N-acetyl-D-glucosamine kinase</fullName>
        <ecNumber evidence="1">2.7.1.59</ecNumber>
    </recommendedName>
    <alternativeName>
        <fullName evidence="1">GlcNAc kinase</fullName>
    </alternativeName>
</protein>
<accession>B6EKQ4</accession>
<feature type="chain" id="PRO_1000140179" description="N-acetyl-D-glucosamine kinase">
    <location>
        <begin position="1"/>
        <end position="302"/>
    </location>
</feature>
<feature type="binding site" evidence="1">
    <location>
        <begin position="4"/>
        <end position="11"/>
    </location>
    <ligand>
        <name>ATP</name>
        <dbReference type="ChEBI" id="CHEBI:30616"/>
    </ligand>
</feature>
<feature type="binding site" evidence="1">
    <location>
        <begin position="133"/>
        <end position="140"/>
    </location>
    <ligand>
        <name>ATP</name>
        <dbReference type="ChEBI" id="CHEBI:30616"/>
    </ligand>
</feature>
<feature type="binding site" evidence="1">
    <location>
        <position position="157"/>
    </location>
    <ligand>
        <name>Zn(2+)</name>
        <dbReference type="ChEBI" id="CHEBI:29105"/>
    </ligand>
</feature>
<feature type="binding site" evidence="1">
    <location>
        <position position="177"/>
    </location>
    <ligand>
        <name>Zn(2+)</name>
        <dbReference type="ChEBI" id="CHEBI:29105"/>
    </ligand>
</feature>
<feature type="binding site" evidence="1">
    <location>
        <position position="179"/>
    </location>
    <ligand>
        <name>Zn(2+)</name>
        <dbReference type="ChEBI" id="CHEBI:29105"/>
    </ligand>
</feature>
<feature type="binding site" evidence="1">
    <location>
        <position position="184"/>
    </location>
    <ligand>
        <name>Zn(2+)</name>
        <dbReference type="ChEBI" id="CHEBI:29105"/>
    </ligand>
</feature>
<proteinExistence type="inferred from homology"/>
<evidence type="ECO:0000255" key="1">
    <source>
        <dbReference type="HAMAP-Rule" id="MF_01271"/>
    </source>
</evidence>